<accession>Q7UI86</accession>
<feature type="chain" id="PRO_0000370134" description="3-deoxy-manno-octulosonate cytidylyltransferase">
    <location>
        <begin position="1"/>
        <end position="250"/>
    </location>
</feature>
<organism>
    <name type="scientific">Rhodopirellula baltica (strain DSM 10527 / NCIMB 13988 / SH1)</name>
    <dbReference type="NCBI Taxonomy" id="243090"/>
    <lineage>
        <taxon>Bacteria</taxon>
        <taxon>Pseudomonadati</taxon>
        <taxon>Planctomycetota</taxon>
        <taxon>Planctomycetia</taxon>
        <taxon>Pirellulales</taxon>
        <taxon>Pirellulaceae</taxon>
        <taxon>Rhodopirellula</taxon>
    </lineage>
</organism>
<gene>
    <name evidence="1" type="primary">kdsB</name>
    <name type="ordered locus">RB12690</name>
</gene>
<name>KDSB_RHOBA</name>
<proteinExistence type="inferred from homology"/>
<evidence type="ECO:0000255" key="1">
    <source>
        <dbReference type="HAMAP-Rule" id="MF_00057"/>
    </source>
</evidence>
<dbReference type="EC" id="2.7.7.38" evidence="1"/>
<dbReference type="EMBL" id="BX294155">
    <property type="protein sequence ID" value="CAD77728.1"/>
    <property type="molecule type" value="Genomic_DNA"/>
</dbReference>
<dbReference type="RefSeq" id="NP_870651.1">
    <property type="nucleotide sequence ID" value="NC_005027.1"/>
</dbReference>
<dbReference type="RefSeq" id="WP_011123860.1">
    <property type="nucleotide sequence ID" value="NC_005027.1"/>
</dbReference>
<dbReference type="SMR" id="Q7UI86"/>
<dbReference type="FunCoup" id="Q7UI86">
    <property type="interactions" value="382"/>
</dbReference>
<dbReference type="STRING" id="243090.RB12690"/>
<dbReference type="EnsemblBacteria" id="CAD77728">
    <property type="protein sequence ID" value="CAD77728"/>
    <property type="gene ID" value="RB12690"/>
</dbReference>
<dbReference type="KEGG" id="rba:RB12690"/>
<dbReference type="PATRIC" id="fig|243090.15.peg.6155"/>
<dbReference type="eggNOG" id="COG1212">
    <property type="taxonomic scope" value="Bacteria"/>
</dbReference>
<dbReference type="HOGENOM" id="CLU_065038_1_0_0"/>
<dbReference type="InParanoid" id="Q7UI86"/>
<dbReference type="OrthoDB" id="9815559at2"/>
<dbReference type="UniPathway" id="UPA00030"/>
<dbReference type="UniPathway" id="UPA00358">
    <property type="reaction ID" value="UER00476"/>
</dbReference>
<dbReference type="Proteomes" id="UP000001025">
    <property type="component" value="Chromosome"/>
</dbReference>
<dbReference type="GO" id="GO:0005829">
    <property type="term" value="C:cytosol"/>
    <property type="evidence" value="ECO:0000318"/>
    <property type="project" value="GO_Central"/>
</dbReference>
<dbReference type="GO" id="GO:0008690">
    <property type="term" value="F:3-deoxy-manno-octulosonate cytidylyltransferase activity"/>
    <property type="evidence" value="ECO:0000318"/>
    <property type="project" value="GO_Central"/>
</dbReference>
<dbReference type="GO" id="GO:0033468">
    <property type="term" value="P:CMP-keto-3-deoxy-D-manno-octulosonic acid biosynthetic process"/>
    <property type="evidence" value="ECO:0007669"/>
    <property type="project" value="UniProtKB-UniRule"/>
</dbReference>
<dbReference type="GO" id="GO:0009103">
    <property type="term" value="P:lipopolysaccharide biosynthetic process"/>
    <property type="evidence" value="ECO:0007669"/>
    <property type="project" value="UniProtKB-UniRule"/>
</dbReference>
<dbReference type="CDD" id="cd02517">
    <property type="entry name" value="CMP-KDO-Synthetase"/>
    <property type="match status" value="1"/>
</dbReference>
<dbReference type="Gene3D" id="3.90.550.10">
    <property type="entry name" value="Spore Coat Polysaccharide Biosynthesis Protein SpsA, Chain A"/>
    <property type="match status" value="1"/>
</dbReference>
<dbReference type="HAMAP" id="MF_00057">
    <property type="entry name" value="KdsB"/>
    <property type="match status" value="1"/>
</dbReference>
<dbReference type="InterPro" id="IPR003329">
    <property type="entry name" value="Cytidylyl_trans"/>
</dbReference>
<dbReference type="InterPro" id="IPR004528">
    <property type="entry name" value="KdsB"/>
</dbReference>
<dbReference type="InterPro" id="IPR029044">
    <property type="entry name" value="Nucleotide-diphossugar_trans"/>
</dbReference>
<dbReference type="NCBIfam" id="TIGR00466">
    <property type="entry name" value="kdsB"/>
    <property type="match status" value="1"/>
</dbReference>
<dbReference type="NCBIfam" id="NF003952">
    <property type="entry name" value="PRK05450.1-5"/>
    <property type="match status" value="1"/>
</dbReference>
<dbReference type="PANTHER" id="PTHR42866">
    <property type="entry name" value="3-DEOXY-MANNO-OCTULOSONATE CYTIDYLYLTRANSFERASE"/>
    <property type="match status" value="1"/>
</dbReference>
<dbReference type="PANTHER" id="PTHR42866:SF2">
    <property type="entry name" value="3-DEOXY-MANNO-OCTULOSONATE CYTIDYLYLTRANSFERASE, MITOCHONDRIAL"/>
    <property type="match status" value="1"/>
</dbReference>
<dbReference type="Pfam" id="PF02348">
    <property type="entry name" value="CTP_transf_3"/>
    <property type="match status" value="1"/>
</dbReference>
<dbReference type="SUPFAM" id="SSF53448">
    <property type="entry name" value="Nucleotide-diphospho-sugar transferases"/>
    <property type="match status" value="1"/>
</dbReference>
<sequence>MKCMIVIPARLASSRLSQKLLLQAGGKSVLQHTYEAALKSSVAEEVIVAVDDPRLAAEVDSFGGQARLTSVDCQSGTDRIAEVALMHEDINILINVQGDEPEIDPKTIDAVAKLLMQHPEADIATAACAIKDRERVEDPNCVKAVLGDDHRAITFSRAAVPHPRDGLTDALLNAEPPNYWQHIGLYAYRREFLLWFATQPPGRLEQIEKLEQLRAIEAGKTIVVAPVEASAPGIDTLEDFRAFTARIESQ</sequence>
<comment type="function">
    <text evidence="1">Activates KDO (a required 8-carbon sugar) for incorporation into bacterial lipopolysaccharide in Gram-negative bacteria.</text>
</comment>
<comment type="catalytic activity">
    <reaction evidence="1">
        <text>3-deoxy-alpha-D-manno-oct-2-ulosonate + CTP = CMP-3-deoxy-beta-D-manno-octulosonate + diphosphate</text>
        <dbReference type="Rhea" id="RHEA:23448"/>
        <dbReference type="ChEBI" id="CHEBI:33019"/>
        <dbReference type="ChEBI" id="CHEBI:37563"/>
        <dbReference type="ChEBI" id="CHEBI:85986"/>
        <dbReference type="ChEBI" id="CHEBI:85987"/>
        <dbReference type="EC" id="2.7.7.38"/>
    </reaction>
</comment>
<comment type="pathway">
    <text evidence="1">Nucleotide-sugar biosynthesis; CMP-3-deoxy-D-manno-octulosonate biosynthesis; CMP-3-deoxy-D-manno-octulosonate from 3-deoxy-D-manno-octulosonate and CTP: step 1/1.</text>
</comment>
<comment type="pathway">
    <text evidence="1">Bacterial outer membrane biogenesis; lipopolysaccharide biosynthesis.</text>
</comment>
<comment type="subcellular location">
    <subcellularLocation>
        <location evidence="1">Cytoplasm</location>
    </subcellularLocation>
</comment>
<comment type="similarity">
    <text evidence="1">Belongs to the KdsB family.</text>
</comment>
<reference key="1">
    <citation type="journal article" date="2003" name="Proc. Natl. Acad. Sci. U.S.A.">
        <title>Complete genome sequence of the marine planctomycete Pirellula sp. strain 1.</title>
        <authorList>
            <person name="Gloeckner F.O."/>
            <person name="Kube M."/>
            <person name="Bauer M."/>
            <person name="Teeling H."/>
            <person name="Lombardot T."/>
            <person name="Ludwig W."/>
            <person name="Gade D."/>
            <person name="Beck A."/>
            <person name="Borzym K."/>
            <person name="Heitmann K."/>
            <person name="Rabus R."/>
            <person name="Schlesner H."/>
            <person name="Amann R."/>
            <person name="Reinhardt R."/>
        </authorList>
    </citation>
    <scope>NUCLEOTIDE SEQUENCE [LARGE SCALE GENOMIC DNA]</scope>
    <source>
        <strain>DSM 10527 / NCIMB 13988 / SH1</strain>
    </source>
</reference>
<keyword id="KW-0963">Cytoplasm</keyword>
<keyword id="KW-0448">Lipopolysaccharide biosynthesis</keyword>
<keyword id="KW-0548">Nucleotidyltransferase</keyword>
<keyword id="KW-1185">Reference proteome</keyword>
<keyword id="KW-0808">Transferase</keyword>
<protein>
    <recommendedName>
        <fullName evidence="1">3-deoxy-manno-octulosonate cytidylyltransferase</fullName>
        <ecNumber evidence="1">2.7.7.38</ecNumber>
    </recommendedName>
    <alternativeName>
        <fullName evidence="1">CMP-2-keto-3-deoxyoctulosonic acid synthase</fullName>
        <shortName evidence="1">CKS</shortName>
        <shortName evidence="1">CMP-KDO synthase</shortName>
    </alternativeName>
</protein>